<protein>
    <recommendedName>
        <fullName>Uncharacterized ATP-dependent helicase YqhH</fullName>
        <ecNumber>3.6.4.-</ecNumber>
    </recommendedName>
</protein>
<feature type="chain" id="PRO_0000074379" description="Uncharacterized ATP-dependent helicase YqhH">
    <location>
        <begin position="1"/>
        <end position="557"/>
    </location>
</feature>
<feature type="domain" description="Helicase ATP-binding" evidence="1">
    <location>
        <begin position="70"/>
        <end position="224"/>
    </location>
</feature>
<feature type="domain" description="Helicase C-terminal" evidence="2">
    <location>
        <begin position="363"/>
        <end position="524"/>
    </location>
</feature>
<feature type="short sequence motif" description="DEAH box">
    <location>
        <begin position="175"/>
        <end position="178"/>
    </location>
</feature>
<feature type="binding site" evidence="1">
    <location>
        <begin position="82"/>
        <end position="90"/>
    </location>
    <ligand>
        <name>ATP</name>
        <dbReference type="ChEBI" id="CHEBI:30616"/>
    </ligand>
</feature>
<sequence length="557" mass="64672">MNTEMIYDAKWPEEFAERLKNDGPWANWELYKLSAEIQKTLAIPEFEGLRAPLYLPSFTPLPHQLEVAQKVVEKMNGKAILADEVGLGKTVEAGLILKEYMIRGLAKKILILVPASLVSQWVKELQEKFLIPAVEQKKSYVWEQCDIVVSSIDTAKRSPHREIVLSIPYDLVIIDEAHKLKNSKTKNYEFVRNLVKKYCLLLTATPIQNRIEEIFNLVSLLKPGHLGSQNHFQEEFAKKKSSLEAHEHLKDLVNKVMIRNRRHDTGLNWKQRHVETVPIQFSPSEQALYDEISRLKDSINKPASMFSIMTLQRECCSSREAVYMTLKKMLDQKEKQAPAIDEDTISVLIDRINQVTQNSKALQVVDLIKKIDDKVIIFTEYRATQIYLQWFLQQNGISSVPFRGGFKRGKKDWMKDLFRGKIQVLIATEAGGEGINLQFCNHMINYDLPWNPMRLEQRIGRIHRLGQERDVHIYNMATKHTVEEHILKLLYEKIHLFEKVVGELDDILTKIQVNNFEEHLHDILYHSATEEEMKIKMDNLTSFLSYKKQLPAEKRGS</sequence>
<organism>
    <name type="scientific">Bacillus subtilis (strain 168)</name>
    <dbReference type="NCBI Taxonomy" id="224308"/>
    <lineage>
        <taxon>Bacteria</taxon>
        <taxon>Bacillati</taxon>
        <taxon>Bacillota</taxon>
        <taxon>Bacilli</taxon>
        <taxon>Bacillales</taxon>
        <taxon>Bacillaceae</taxon>
        <taxon>Bacillus</taxon>
    </lineage>
</organism>
<name>YQHH_BACSU</name>
<proteinExistence type="inferred from homology"/>
<comment type="similarity">
    <text evidence="3">Belongs to the SNF2/RAD54 helicase family.</text>
</comment>
<accession>P54509</accession>
<evidence type="ECO:0000255" key="1">
    <source>
        <dbReference type="PROSITE-ProRule" id="PRU00541"/>
    </source>
</evidence>
<evidence type="ECO:0000255" key="2">
    <source>
        <dbReference type="PROSITE-ProRule" id="PRU00542"/>
    </source>
</evidence>
<evidence type="ECO:0000305" key="3"/>
<gene>
    <name type="primary">yqhH</name>
    <name type="ordered locus">BSU24580</name>
</gene>
<reference key="1">
    <citation type="journal article" date="1996" name="Microbiology">
        <title>Systematic sequencing of the 283 kb 210 degrees-232 degrees region of the Bacillus subtilis genome containing the skin element and many sporulation genes.</title>
        <authorList>
            <person name="Mizuno M."/>
            <person name="Masuda S."/>
            <person name="Takemaru K."/>
            <person name="Hosono S."/>
            <person name="Sato T."/>
            <person name="Takeuchi M."/>
            <person name="Kobayashi Y."/>
        </authorList>
    </citation>
    <scope>NUCLEOTIDE SEQUENCE [GENOMIC DNA]</scope>
    <source>
        <strain>168 / JH642</strain>
    </source>
</reference>
<reference key="2">
    <citation type="journal article" date="1997" name="Nature">
        <title>The complete genome sequence of the Gram-positive bacterium Bacillus subtilis.</title>
        <authorList>
            <person name="Kunst F."/>
            <person name="Ogasawara N."/>
            <person name="Moszer I."/>
            <person name="Albertini A.M."/>
            <person name="Alloni G."/>
            <person name="Azevedo V."/>
            <person name="Bertero M.G."/>
            <person name="Bessieres P."/>
            <person name="Bolotin A."/>
            <person name="Borchert S."/>
            <person name="Borriss R."/>
            <person name="Boursier L."/>
            <person name="Brans A."/>
            <person name="Braun M."/>
            <person name="Brignell S.C."/>
            <person name="Bron S."/>
            <person name="Brouillet S."/>
            <person name="Bruschi C.V."/>
            <person name="Caldwell B."/>
            <person name="Capuano V."/>
            <person name="Carter N.M."/>
            <person name="Choi S.-K."/>
            <person name="Codani J.-J."/>
            <person name="Connerton I.F."/>
            <person name="Cummings N.J."/>
            <person name="Daniel R.A."/>
            <person name="Denizot F."/>
            <person name="Devine K.M."/>
            <person name="Duesterhoeft A."/>
            <person name="Ehrlich S.D."/>
            <person name="Emmerson P.T."/>
            <person name="Entian K.-D."/>
            <person name="Errington J."/>
            <person name="Fabret C."/>
            <person name="Ferrari E."/>
            <person name="Foulger D."/>
            <person name="Fritz C."/>
            <person name="Fujita M."/>
            <person name="Fujita Y."/>
            <person name="Fuma S."/>
            <person name="Galizzi A."/>
            <person name="Galleron N."/>
            <person name="Ghim S.-Y."/>
            <person name="Glaser P."/>
            <person name="Goffeau A."/>
            <person name="Golightly E.J."/>
            <person name="Grandi G."/>
            <person name="Guiseppi G."/>
            <person name="Guy B.J."/>
            <person name="Haga K."/>
            <person name="Haiech J."/>
            <person name="Harwood C.R."/>
            <person name="Henaut A."/>
            <person name="Hilbert H."/>
            <person name="Holsappel S."/>
            <person name="Hosono S."/>
            <person name="Hullo M.-F."/>
            <person name="Itaya M."/>
            <person name="Jones L.-M."/>
            <person name="Joris B."/>
            <person name="Karamata D."/>
            <person name="Kasahara Y."/>
            <person name="Klaerr-Blanchard M."/>
            <person name="Klein C."/>
            <person name="Kobayashi Y."/>
            <person name="Koetter P."/>
            <person name="Koningstein G."/>
            <person name="Krogh S."/>
            <person name="Kumano M."/>
            <person name="Kurita K."/>
            <person name="Lapidus A."/>
            <person name="Lardinois S."/>
            <person name="Lauber J."/>
            <person name="Lazarevic V."/>
            <person name="Lee S.-M."/>
            <person name="Levine A."/>
            <person name="Liu H."/>
            <person name="Masuda S."/>
            <person name="Mauel C."/>
            <person name="Medigue C."/>
            <person name="Medina N."/>
            <person name="Mellado R.P."/>
            <person name="Mizuno M."/>
            <person name="Moestl D."/>
            <person name="Nakai S."/>
            <person name="Noback M."/>
            <person name="Noone D."/>
            <person name="O'Reilly M."/>
            <person name="Ogawa K."/>
            <person name="Ogiwara A."/>
            <person name="Oudega B."/>
            <person name="Park S.-H."/>
            <person name="Parro V."/>
            <person name="Pohl T.M."/>
            <person name="Portetelle D."/>
            <person name="Porwollik S."/>
            <person name="Prescott A.M."/>
            <person name="Presecan E."/>
            <person name="Pujic P."/>
            <person name="Purnelle B."/>
            <person name="Rapoport G."/>
            <person name="Rey M."/>
            <person name="Reynolds S."/>
            <person name="Rieger M."/>
            <person name="Rivolta C."/>
            <person name="Rocha E."/>
            <person name="Roche B."/>
            <person name="Rose M."/>
            <person name="Sadaie Y."/>
            <person name="Sato T."/>
            <person name="Scanlan E."/>
            <person name="Schleich S."/>
            <person name="Schroeter R."/>
            <person name="Scoffone F."/>
            <person name="Sekiguchi J."/>
            <person name="Sekowska A."/>
            <person name="Seror S.J."/>
            <person name="Serror P."/>
            <person name="Shin B.-S."/>
            <person name="Soldo B."/>
            <person name="Sorokin A."/>
            <person name="Tacconi E."/>
            <person name="Takagi T."/>
            <person name="Takahashi H."/>
            <person name="Takemaru K."/>
            <person name="Takeuchi M."/>
            <person name="Tamakoshi A."/>
            <person name="Tanaka T."/>
            <person name="Terpstra P."/>
            <person name="Tognoni A."/>
            <person name="Tosato V."/>
            <person name="Uchiyama S."/>
            <person name="Vandenbol M."/>
            <person name="Vannier F."/>
            <person name="Vassarotti A."/>
            <person name="Viari A."/>
            <person name="Wambutt R."/>
            <person name="Wedler E."/>
            <person name="Wedler H."/>
            <person name="Weitzenegger T."/>
            <person name="Winters P."/>
            <person name="Wipat A."/>
            <person name="Yamamoto H."/>
            <person name="Yamane K."/>
            <person name="Yasumoto K."/>
            <person name="Yata K."/>
            <person name="Yoshida K."/>
            <person name="Yoshikawa H.-F."/>
            <person name="Zumstein E."/>
            <person name="Yoshikawa H."/>
            <person name="Danchin A."/>
        </authorList>
    </citation>
    <scope>NUCLEOTIDE SEQUENCE [LARGE SCALE GENOMIC DNA]</scope>
    <source>
        <strain>168</strain>
    </source>
</reference>
<keyword id="KW-0067">ATP-binding</keyword>
<keyword id="KW-0347">Helicase</keyword>
<keyword id="KW-0378">Hydrolase</keyword>
<keyword id="KW-0547">Nucleotide-binding</keyword>
<keyword id="KW-1185">Reference proteome</keyword>
<dbReference type="EC" id="3.6.4.-"/>
<dbReference type="EMBL" id="D84432">
    <property type="protein sequence ID" value="BAA12545.1"/>
    <property type="molecule type" value="Genomic_DNA"/>
</dbReference>
<dbReference type="EMBL" id="AL009126">
    <property type="protein sequence ID" value="CAB14389.1"/>
    <property type="molecule type" value="Genomic_DNA"/>
</dbReference>
<dbReference type="PIR" id="G69958">
    <property type="entry name" value="G69958"/>
</dbReference>
<dbReference type="RefSeq" id="NP_390338.1">
    <property type="nucleotide sequence ID" value="NC_000964.3"/>
</dbReference>
<dbReference type="RefSeq" id="WP_004398544.1">
    <property type="nucleotide sequence ID" value="NZ_OZ025638.1"/>
</dbReference>
<dbReference type="SMR" id="P54509"/>
<dbReference type="FunCoup" id="P54509">
    <property type="interactions" value="5"/>
</dbReference>
<dbReference type="STRING" id="224308.BSU24580"/>
<dbReference type="PaxDb" id="224308-BSU24580"/>
<dbReference type="DNASU" id="938548"/>
<dbReference type="EnsemblBacteria" id="CAB14389">
    <property type="protein sequence ID" value="CAB14389"/>
    <property type="gene ID" value="BSU_24580"/>
</dbReference>
<dbReference type="GeneID" id="938548"/>
<dbReference type="KEGG" id="bsu:BSU24580"/>
<dbReference type="PATRIC" id="fig|224308.179.peg.2676"/>
<dbReference type="eggNOG" id="COG0553">
    <property type="taxonomic scope" value="Bacteria"/>
</dbReference>
<dbReference type="InParanoid" id="P54509"/>
<dbReference type="OrthoDB" id="9814088at2"/>
<dbReference type="PhylomeDB" id="P54509"/>
<dbReference type="BioCyc" id="BSUB:BSU24580-MONOMER"/>
<dbReference type="Proteomes" id="UP000001570">
    <property type="component" value="Chromosome"/>
</dbReference>
<dbReference type="GO" id="GO:0005524">
    <property type="term" value="F:ATP binding"/>
    <property type="evidence" value="ECO:0007669"/>
    <property type="project" value="UniProtKB-KW"/>
</dbReference>
<dbReference type="GO" id="GO:0003682">
    <property type="term" value="F:chromatin binding"/>
    <property type="evidence" value="ECO:0000318"/>
    <property type="project" value="GO_Central"/>
</dbReference>
<dbReference type="GO" id="GO:0003677">
    <property type="term" value="F:DNA binding"/>
    <property type="evidence" value="ECO:0000318"/>
    <property type="project" value="GO_Central"/>
</dbReference>
<dbReference type="GO" id="GO:0004386">
    <property type="term" value="F:helicase activity"/>
    <property type="evidence" value="ECO:0007669"/>
    <property type="project" value="UniProtKB-KW"/>
</dbReference>
<dbReference type="GO" id="GO:0016787">
    <property type="term" value="F:hydrolase activity"/>
    <property type="evidence" value="ECO:0007669"/>
    <property type="project" value="UniProtKB-KW"/>
</dbReference>
<dbReference type="GO" id="GO:0140750">
    <property type="term" value="F:nucleosome array spacer activity"/>
    <property type="evidence" value="ECO:0000318"/>
    <property type="project" value="GO_Central"/>
</dbReference>
<dbReference type="GO" id="GO:0045944">
    <property type="term" value="P:positive regulation of transcription by RNA polymerase II"/>
    <property type="evidence" value="ECO:0000318"/>
    <property type="project" value="GO_Central"/>
</dbReference>
<dbReference type="CDD" id="cd18011">
    <property type="entry name" value="DEXDc_RapA"/>
    <property type="match status" value="1"/>
</dbReference>
<dbReference type="CDD" id="cd18793">
    <property type="entry name" value="SF2_C_SNF"/>
    <property type="match status" value="1"/>
</dbReference>
<dbReference type="Gene3D" id="3.40.50.300">
    <property type="entry name" value="P-loop containing nucleotide triphosphate hydrolases"/>
    <property type="match status" value="1"/>
</dbReference>
<dbReference type="Gene3D" id="3.40.50.10810">
    <property type="entry name" value="Tandem AAA-ATPase domain"/>
    <property type="match status" value="1"/>
</dbReference>
<dbReference type="InterPro" id="IPR014001">
    <property type="entry name" value="Helicase_ATP-bd"/>
</dbReference>
<dbReference type="InterPro" id="IPR001650">
    <property type="entry name" value="Helicase_C-like"/>
</dbReference>
<dbReference type="InterPro" id="IPR027417">
    <property type="entry name" value="P-loop_NTPase"/>
</dbReference>
<dbReference type="InterPro" id="IPR038718">
    <property type="entry name" value="SNF2-like_sf"/>
</dbReference>
<dbReference type="InterPro" id="IPR049730">
    <property type="entry name" value="SNF2/RAD54-like_C"/>
</dbReference>
<dbReference type="InterPro" id="IPR000330">
    <property type="entry name" value="SNF2_N"/>
</dbReference>
<dbReference type="PANTHER" id="PTHR10799">
    <property type="entry name" value="SNF2/RAD54 HELICASE FAMILY"/>
    <property type="match status" value="1"/>
</dbReference>
<dbReference type="Pfam" id="PF00271">
    <property type="entry name" value="Helicase_C"/>
    <property type="match status" value="1"/>
</dbReference>
<dbReference type="Pfam" id="PF00176">
    <property type="entry name" value="SNF2-rel_dom"/>
    <property type="match status" value="1"/>
</dbReference>
<dbReference type="SMART" id="SM00487">
    <property type="entry name" value="DEXDc"/>
    <property type="match status" value="1"/>
</dbReference>
<dbReference type="SMART" id="SM00490">
    <property type="entry name" value="HELICc"/>
    <property type="match status" value="1"/>
</dbReference>
<dbReference type="SUPFAM" id="SSF52540">
    <property type="entry name" value="P-loop containing nucleoside triphosphate hydrolases"/>
    <property type="match status" value="2"/>
</dbReference>
<dbReference type="PROSITE" id="PS51192">
    <property type="entry name" value="HELICASE_ATP_BIND_1"/>
    <property type="match status" value="1"/>
</dbReference>
<dbReference type="PROSITE" id="PS51194">
    <property type="entry name" value="HELICASE_CTER"/>
    <property type="match status" value="1"/>
</dbReference>